<accession>Q6HAF3</accession>
<protein>
    <recommendedName>
        <fullName evidence="1">tRNA uridine 5-carboxymethylaminomethyl modification enzyme MnmG</fullName>
    </recommendedName>
    <alternativeName>
        <fullName evidence="1">Glucose-inhibited division protein A</fullName>
    </alternativeName>
</protein>
<keyword id="KW-0963">Cytoplasm</keyword>
<keyword id="KW-0274">FAD</keyword>
<keyword id="KW-0285">Flavoprotein</keyword>
<keyword id="KW-0520">NAD</keyword>
<keyword id="KW-0819">tRNA processing</keyword>
<sequence length="629" mass="70334">MGYNAGSYDVIVIGAGHAGCEAGLAAARMGSKTLMLTINLDMVAFMPCNPSVGGPAKGIVVREIDALGGEMGRNIDKTHIQMRMLNTGKGPAVRALRAQADKFSYQHELKKTIEETPNLTLFQGMVERLIVEDGECKGVITQAGAEYTAKTVVITTGTFLRGEIIMGDLKYSSGPNNQQPSITLSEHLEELGFDLVRFKTGTPPRVNSNTIDYSKTEIQPGDDKPRAFSFETTKFIMDQIPCWLTYTSTETHRLIDENLHRSAMYSGMIKGTGPRYCPSIEDKVVRFNDKPRHQIFLEPEGRNTQEVYVQGLSTSLPEDVQRDMLRTIPGLENVEMMRTGYAIEYDAIVPTQLWPTLETKKIKNLYTAGQINGTSGYEEAAGQGLMAGINAACRSLGKKEVILGREDAYIGVLIDDLVTKGTNEPYRLLTSRAEYRLLLRHDNADLRLTEVGHEIGLITEERYERFTNKKLQIEQEKERLSSIIIKPRPEVQELIRNIGGSELKDGIRASDLLRRPEMTYEHIHLLVPSEVELSDEVKEQVEIQIKYEGYIEKSLQQVERMKKMENKKIPVDIDYDAISSLASEARQKLKDVRPLSMGQASRISGVNPADISILLVYIEQGKIARVSNQ</sequence>
<evidence type="ECO:0000255" key="1">
    <source>
        <dbReference type="HAMAP-Rule" id="MF_00129"/>
    </source>
</evidence>
<proteinExistence type="inferred from homology"/>
<dbReference type="EMBL" id="AE017355">
    <property type="protein sequence ID" value="AAT63338.1"/>
    <property type="molecule type" value="Genomic_DNA"/>
</dbReference>
<dbReference type="RefSeq" id="WP_000541039.1">
    <property type="nucleotide sequence ID" value="NC_005957.1"/>
</dbReference>
<dbReference type="RefSeq" id="YP_039473.1">
    <property type="nucleotide sequence ID" value="NC_005957.1"/>
</dbReference>
<dbReference type="SMR" id="Q6HAF3"/>
<dbReference type="GeneID" id="45025311"/>
<dbReference type="KEGG" id="btk:BT9727_5164"/>
<dbReference type="PATRIC" id="fig|281309.8.peg.5489"/>
<dbReference type="HOGENOM" id="CLU_007831_2_2_9"/>
<dbReference type="Proteomes" id="UP000001301">
    <property type="component" value="Chromosome"/>
</dbReference>
<dbReference type="GO" id="GO:0005829">
    <property type="term" value="C:cytosol"/>
    <property type="evidence" value="ECO:0007669"/>
    <property type="project" value="TreeGrafter"/>
</dbReference>
<dbReference type="GO" id="GO:0050660">
    <property type="term" value="F:flavin adenine dinucleotide binding"/>
    <property type="evidence" value="ECO:0007669"/>
    <property type="project" value="UniProtKB-UniRule"/>
</dbReference>
<dbReference type="GO" id="GO:0030488">
    <property type="term" value="P:tRNA methylation"/>
    <property type="evidence" value="ECO:0007669"/>
    <property type="project" value="TreeGrafter"/>
</dbReference>
<dbReference type="GO" id="GO:0002098">
    <property type="term" value="P:tRNA wobble uridine modification"/>
    <property type="evidence" value="ECO:0007669"/>
    <property type="project" value="InterPro"/>
</dbReference>
<dbReference type="FunFam" id="1.10.10.1800:FF:000001">
    <property type="entry name" value="tRNA uridine 5-carboxymethylaminomethyl modification enzyme MnmG"/>
    <property type="match status" value="1"/>
</dbReference>
<dbReference type="FunFam" id="1.10.150.570:FF:000001">
    <property type="entry name" value="tRNA uridine 5-carboxymethylaminomethyl modification enzyme MnmG"/>
    <property type="match status" value="1"/>
</dbReference>
<dbReference type="FunFam" id="3.50.50.60:FF:000002">
    <property type="entry name" value="tRNA uridine 5-carboxymethylaminomethyl modification enzyme MnmG"/>
    <property type="match status" value="1"/>
</dbReference>
<dbReference type="FunFam" id="3.50.50.60:FF:000063">
    <property type="entry name" value="tRNA uridine 5-carboxymethylaminomethyl modification enzyme MnmG"/>
    <property type="match status" value="1"/>
</dbReference>
<dbReference type="Gene3D" id="3.50.50.60">
    <property type="entry name" value="FAD/NAD(P)-binding domain"/>
    <property type="match status" value="2"/>
</dbReference>
<dbReference type="Gene3D" id="1.10.150.570">
    <property type="entry name" value="GidA associated domain, C-terminal subdomain"/>
    <property type="match status" value="1"/>
</dbReference>
<dbReference type="Gene3D" id="1.10.10.1800">
    <property type="entry name" value="tRNA uridine 5-carboxymethylaminomethyl modification enzyme MnmG/GidA"/>
    <property type="match status" value="1"/>
</dbReference>
<dbReference type="HAMAP" id="MF_00129">
    <property type="entry name" value="MnmG_GidA"/>
    <property type="match status" value="1"/>
</dbReference>
<dbReference type="InterPro" id="IPR036188">
    <property type="entry name" value="FAD/NAD-bd_sf"/>
</dbReference>
<dbReference type="InterPro" id="IPR049312">
    <property type="entry name" value="GIDA_C_N"/>
</dbReference>
<dbReference type="InterPro" id="IPR004416">
    <property type="entry name" value="MnmG"/>
</dbReference>
<dbReference type="InterPro" id="IPR002218">
    <property type="entry name" value="MnmG-rel"/>
</dbReference>
<dbReference type="InterPro" id="IPR020595">
    <property type="entry name" value="MnmG-rel_CS"/>
</dbReference>
<dbReference type="InterPro" id="IPR026904">
    <property type="entry name" value="MnmG_C"/>
</dbReference>
<dbReference type="InterPro" id="IPR047001">
    <property type="entry name" value="MnmG_C_subdom"/>
</dbReference>
<dbReference type="InterPro" id="IPR044920">
    <property type="entry name" value="MnmG_C_subdom_sf"/>
</dbReference>
<dbReference type="InterPro" id="IPR040131">
    <property type="entry name" value="MnmG_N"/>
</dbReference>
<dbReference type="NCBIfam" id="TIGR00136">
    <property type="entry name" value="mnmG_gidA"/>
    <property type="match status" value="1"/>
</dbReference>
<dbReference type="PANTHER" id="PTHR11806">
    <property type="entry name" value="GLUCOSE INHIBITED DIVISION PROTEIN A"/>
    <property type="match status" value="1"/>
</dbReference>
<dbReference type="PANTHER" id="PTHR11806:SF0">
    <property type="entry name" value="PROTEIN MTO1 HOMOLOG, MITOCHONDRIAL"/>
    <property type="match status" value="1"/>
</dbReference>
<dbReference type="Pfam" id="PF01134">
    <property type="entry name" value="GIDA"/>
    <property type="match status" value="1"/>
</dbReference>
<dbReference type="Pfam" id="PF21680">
    <property type="entry name" value="GIDA_C_1st"/>
    <property type="match status" value="1"/>
</dbReference>
<dbReference type="Pfam" id="PF13932">
    <property type="entry name" value="SAM_GIDA_C"/>
    <property type="match status" value="1"/>
</dbReference>
<dbReference type="PRINTS" id="PR00411">
    <property type="entry name" value="PNDRDTASEI"/>
</dbReference>
<dbReference type="SMART" id="SM01228">
    <property type="entry name" value="GIDA_assoc_3"/>
    <property type="match status" value="1"/>
</dbReference>
<dbReference type="SUPFAM" id="SSF51905">
    <property type="entry name" value="FAD/NAD(P)-binding domain"/>
    <property type="match status" value="1"/>
</dbReference>
<dbReference type="PROSITE" id="PS01280">
    <property type="entry name" value="GIDA_1"/>
    <property type="match status" value="1"/>
</dbReference>
<dbReference type="PROSITE" id="PS01281">
    <property type="entry name" value="GIDA_2"/>
    <property type="match status" value="1"/>
</dbReference>
<reference key="1">
    <citation type="journal article" date="2006" name="J. Bacteriol.">
        <title>Pathogenomic sequence analysis of Bacillus cereus and Bacillus thuringiensis isolates closely related to Bacillus anthracis.</title>
        <authorList>
            <person name="Han C.S."/>
            <person name="Xie G."/>
            <person name="Challacombe J.F."/>
            <person name="Altherr M.R."/>
            <person name="Bhotika S.S."/>
            <person name="Bruce D."/>
            <person name="Campbell C.S."/>
            <person name="Campbell M.L."/>
            <person name="Chen J."/>
            <person name="Chertkov O."/>
            <person name="Cleland C."/>
            <person name="Dimitrijevic M."/>
            <person name="Doggett N.A."/>
            <person name="Fawcett J.J."/>
            <person name="Glavina T."/>
            <person name="Goodwin L.A."/>
            <person name="Hill K.K."/>
            <person name="Hitchcock P."/>
            <person name="Jackson P.J."/>
            <person name="Keim P."/>
            <person name="Kewalramani A.R."/>
            <person name="Longmire J."/>
            <person name="Lucas S."/>
            <person name="Malfatti S."/>
            <person name="McMurry K."/>
            <person name="Meincke L.J."/>
            <person name="Misra M."/>
            <person name="Moseman B.L."/>
            <person name="Mundt M."/>
            <person name="Munk A.C."/>
            <person name="Okinaka R.T."/>
            <person name="Parson-Quintana B."/>
            <person name="Reilly L.P."/>
            <person name="Richardson P."/>
            <person name="Robinson D.L."/>
            <person name="Rubin E."/>
            <person name="Saunders E."/>
            <person name="Tapia R."/>
            <person name="Tesmer J.G."/>
            <person name="Thayer N."/>
            <person name="Thompson L.S."/>
            <person name="Tice H."/>
            <person name="Ticknor L.O."/>
            <person name="Wills P.L."/>
            <person name="Brettin T.S."/>
            <person name="Gilna P."/>
        </authorList>
    </citation>
    <scope>NUCLEOTIDE SEQUENCE [LARGE SCALE GENOMIC DNA]</scope>
    <source>
        <strain>97-27</strain>
    </source>
</reference>
<feature type="chain" id="PRO_0000117055" description="tRNA uridine 5-carboxymethylaminomethyl modification enzyme MnmG">
    <location>
        <begin position="1"/>
        <end position="629"/>
    </location>
</feature>
<feature type="binding site" evidence="1">
    <location>
        <begin position="14"/>
        <end position="19"/>
    </location>
    <ligand>
        <name>FAD</name>
        <dbReference type="ChEBI" id="CHEBI:57692"/>
    </ligand>
</feature>
<feature type="binding site" evidence="1">
    <location>
        <position position="126"/>
    </location>
    <ligand>
        <name>FAD</name>
        <dbReference type="ChEBI" id="CHEBI:57692"/>
    </ligand>
</feature>
<feature type="binding site" evidence="1">
    <location>
        <position position="181"/>
    </location>
    <ligand>
        <name>FAD</name>
        <dbReference type="ChEBI" id="CHEBI:57692"/>
    </ligand>
</feature>
<feature type="binding site" evidence="1">
    <location>
        <begin position="273"/>
        <end position="287"/>
    </location>
    <ligand>
        <name>NAD(+)</name>
        <dbReference type="ChEBI" id="CHEBI:57540"/>
    </ligand>
</feature>
<feature type="binding site" evidence="1">
    <location>
        <position position="370"/>
    </location>
    <ligand>
        <name>FAD</name>
        <dbReference type="ChEBI" id="CHEBI:57692"/>
    </ligand>
</feature>
<comment type="function">
    <text evidence="1">NAD-binding protein involved in the addition of a carboxymethylaminomethyl (cmnm) group at the wobble position (U34) of certain tRNAs, forming tRNA-cmnm(5)s(2)U34.</text>
</comment>
<comment type="cofactor">
    <cofactor evidence="1">
        <name>FAD</name>
        <dbReference type="ChEBI" id="CHEBI:57692"/>
    </cofactor>
</comment>
<comment type="subunit">
    <text evidence="1">Homodimer. Heterotetramer of two MnmE and two MnmG subunits.</text>
</comment>
<comment type="subcellular location">
    <subcellularLocation>
        <location evidence="1">Cytoplasm</location>
    </subcellularLocation>
</comment>
<comment type="similarity">
    <text evidence="1">Belongs to the MnmG family.</text>
</comment>
<organism>
    <name type="scientific">Bacillus thuringiensis subsp. konkukian (strain 97-27)</name>
    <dbReference type="NCBI Taxonomy" id="281309"/>
    <lineage>
        <taxon>Bacteria</taxon>
        <taxon>Bacillati</taxon>
        <taxon>Bacillota</taxon>
        <taxon>Bacilli</taxon>
        <taxon>Bacillales</taxon>
        <taxon>Bacillaceae</taxon>
        <taxon>Bacillus</taxon>
        <taxon>Bacillus cereus group</taxon>
    </lineage>
</organism>
<name>MNMG_BACHK</name>
<gene>
    <name evidence="1" type="primary">mnmG</name>
    <name evidence="1" type="synonym">gidA</name>
    <name type="ordered locus">BT9727_5164</name>
</gene>